<reference key="1">
    <citation type="journal article" date="2009" name="Insect Mol. Biol.">
        <title>A venom metalloproteinase from the parasitic wasp Eulophus pennicornis is toxic towards its host, tomato moth (Lacanobia oleracae).</title>
        <authorList>
            <person name="Price D.R."/>
            <person name="Bell H.A."/>
            <person name="Hinchliffe G."/>
            <person name="Fitches E."/>
            <person name="Weaver R."/>
            <person name="Gatehouse J.A."/>
        </authorList>
    </citation>
    <scope>NUCLEOTIDE SEQUENCE [MRNA]</scope>
</reference>
<protein>
    <recommendedName>
        <fullName>Venom metalloproteinase 2</fullName>
        <shortName>EpMP2</shortName>
    </recommendedName>
</protein>
<feature type="signal peptide" evidence="2">
    <location>
        <begin position="1"/>
        <end position="22"/>
    </location>
</feature>
<feature type="chain" id="PRO_0000423027" description="Venom metalloproteinase 2">
    <location>
        <begin position="23"/>
        <end position="410"/>
    </location>
</feature>
<feature type="domain" description="Peptidase M12B" evidence="3">
    <location>
        <begin position="214"/>
        <end position="410"/>
    </location>
</feature>
<feature type="active site" evidence="3 4">
    <location>
        <position position="366"/>
    </location>
</feature>
<feature type="binding site" evidence="1">
    <location>
        <position position="365"/>
    </location>
    <ligand>
        <name>Zn(2+)</name>
        <dbReference type="ChEBI" id="CHEBI:29105"/>
        <note>catalytic</note>
    </ligand>
</feature>
<feature type="binding site" evidence="1">
    <location>
        <position position="369"/>
    </location>
    <ligand>
        <name>Zn(2+)</name>
        <dbReference type="ChEBI" id="CHEBI:29105"/>
        <note>catalytic</note>
    </ligand>
</feature>
<feature type="binding site" evidence="1">
    <location>
        <position position="375"/>
    </location>
    <ligand>
        <name>Zn(2+)</name>
        <dbReference type="ChEBI" id="CHEBI:29105"/>
        <note>catalytic</note>
    </ligand>
</feature>
<feature type="glycosylation site" description="N-linked (GlcNAc...) asparagine" evidence="2">
    <location>
        <position position="64"/>
    </location>
</feature>
<feature type="glycosylation site" description="N-linked (GlcNAc...) asparagine" evidence="2">
    <location>
        <position position="112"/>
    </location>
</feature>
<feature type="glycosylation site" description="N-linked (GlcNAc...) asparagine" evidence="2">
    <location>
        <position position="187"/>
    </location>
</feature>
<feature type="glycosylation site" description="N-linked (GlcNAc...) asparagine" evidence="2">
    <location>
        <position position="231"/>
    </location>
</feature>
<feature type="glycosylation site" description="N-linked (GlcNAc...) asparagine" evidence="2">
    <location>
        <position position="292"/>
    </location>
</feature>
<feature type="glycosylation site" description="N-linked (GlcNAc...) asparagine" evidence="2">
    <location>
        <position position="307"/>
    </location>
</feature>
<feature type="glycosylation site" description="N-linked (GlcNAc...) asparagine" evidence="2">
    <location>
        <position position="403"/>
    </location>
</feature>
<comment type="function">
    <text evidence="1">The recombinant protein has gelatinase activity. In vivo, injection of this recombinant into fifth instar L.oleracea (host) larvae results in partial insect mortality associated with the molt to sixth instar, with surviving insects showing retarded development and growth (By similarity).</text>
</comment>
<comment type="cofactor">
    <cofactor evidence="1">
        <name>Zn(2+)</name>
        <dbReference type="ChEBI" id="CHEBI:29105"/>
    </cofactor>
    <text evidence="1">Binds 1 zinc ion per subunit.</text>
</comment>
<comment type="activity regulation">
    <text evidence="1">The gelatinase activity is inhibited by EDTA.</text>
</comment>
<comment type="subunit">
    <text evidence="1">Monomer.</text>
</comment>
<comment type="subcellular location">
    <subcellularLocation>
        <location evidence="1">Secreted</location>
    </subcellularLocation>
</comment>
<comment type="tissue specificity">
    <text>Expressed by the venom gland.</text>
</comment>
<comment type="domain">
    <text evidence="1">The N-terminal section (alone) shows no toxic effect when injected into the host. This section may function in stabilizing the catalytic part of the protein, or in directing it to specific target sites of action (By similarity).</text>
</comment>
<comment type="similarity">
    <text evidence="5">In the C-terminal section; belongs to the venom metalloproteinase (M12B) family.</text>
</comment>
<organism>
    <name type="scientific">Eulophus pennicornis</name>
    <name type="common">Parasitoid wasp</name>
    <dbReference type="NCBI Taxonomy" id="108749"/>
    <lineage>
        <taxon>Eukaryota</taxon>
        <taxon>Metazoa</taxon>
        <taxon>Ecdysozoa</taxon>
        <taxon>Arthropoda</taxon>
        <taxon>Hexapoda</taxon>
        <taxon>Insecta</taxon>
        <taxon>Pterygota</taxon>
        <taxon>Neoptera</taxon>
        <taxon>Endopterygota</taxon>
        <taxon>Hymenoptera</taxon>
        <taxon>Apocrita</taxon>
        <taxon>Proctotrupomorpha</taxon>
        <taxon>Chalcidoidea</taxon>
        <taxon>Eulophidae</taxon>
        <taxon>Eulophinae</taxon>
        <taxon>Eulophus</taxon>
    </lineage>
</organism>
<dbReference type="EMBL" id="EU853178">
    <property type="protein sequence ID" value="ACF60598.1"/>
    <property type="molecule type" value="mRNA"/>
</dbReference>
<dbReference type="SMR" id="B5AJT3"/>
<dbReference type="GO" id="GO:0005576">
    <property type="term" value="C:extracellular region"/>
    <property type="evidence" value="ECO:0007669"/>
    <property type="project" value="UniProtKB-SubCell"/>
</dbReference>
<dbReference type="GO" id="GO:0046872">
    <property type="term" value="F:metal ion binding"/>
    <property type="evidence" value="ECO:0007669"/>
    <property type="project" value="UniProtKB-KW"/>
</dbReference>
<dbReference type="GO" id="GO:0004222">
    <property type="term" value="F:metalloendopeptidase activity"/>
    <property type="evidence" value="ECO:0007669"/>
    <property type="project" value="InterPro"/>
</dbReference>
<dbReference type="GO" id="GO:0090729">
    <property type="term" value="F:toxin activity"/>
    <property type="evidence" value="ECO:0007669"/>
    <property type="project" value="UniProtKB-KW"/>
</dbReference>
<dbReference type="GO" id="GO:0006509">
    <property type="term" value="P:membrane protein ectodomain proteolysis"/>
    <property type="evidence" value="ECO:0007669"/>
    <property type="project" value="TreeGrafter"/>
</dbReference>
<dbReference type="Gene3D" id="3.40.390.10">
    <property type="entry name" value="Collagenase (Catalytic Domain)"/>
    <property type="match status" value="1"/>
</dbReference>
<dbReference type="InterPro" id="IPR024079">
    <property type="entry name" value="MetalloPept_cat_dom_sf"/>
</dbReference>
<dbReference type="InterPro" id="IPR001590">
    <property type="entry name" value="Peptidase_M12B"/>
</dbReference>
<dbReference type="PANTHER" id="PTHR11905">
    <property type="entry name" value="ADAM A DISINTEGRIN AND METALLOPROTEASE DOMAIN"/>
    <property type="match status" value="1"/>
</dbReference>
<dbReference type="PANTHER" id="PTHR11905:SF249">
    <property type="entry name" value="SOL NARAE, ISOFORM C"/>
    <property type="match status" value="1"/>
</dbReference>
<dbReference type="Pfam" id="PF13688">
    <property type="entry name" value="Reprolysin_5"/>
    <property type="match status" value="1"/>
</dbReference>
<dbReference type="SUPFAM" id="SSF55486">
    <property type="entry name" value="Metalloproteases ('zincins'), catalytic domain"/>
    <property type="match status" value="1"/>
</dbReference>
<dbReference type="PROSITE" id="PS50215">
    <property type="entry name" value="ADAM_MEPRO"/>
    <property type="match status" value="1"/>
</dbReference>
<dbReference type="PROSITE" id="PS00142">
    <property type="entry name" value="ZINC_PROTEASE"/>
    <property type="match status" value="1"/>
</dbReference>
<sequence length="410" mass="46611">MDTFILTYSILFLALFIESIHSRYSRVAEHIRTRKRPDKELTEEEFKLVFHRSSTEEIDYDFVNLTTEITEIERKVLFTIDDKDYHLKLTRASSSVIPSGTLIRSAILWTDNQTHFHDEDSTDEHWGSSHIYEDLDKMATFLLRDDDDFTRYDGVFGGGKDMKVVGSLPARLVNIYGANYHFIYYANGSVSDVILNGAKQVVGSANTQAGLNNFYPKLLVLVDYTLFKILNKSYEETIRYLAIFWNAVDMKFKKFETPKINIIITGIIVPKNEGALKHVYDARIKSDMQKVNATKIITNSEHFFGANFSTESYFDNYDATFTMASLNDLEGQTGLAYIGAICKNNHNNAYVKDSGVFSGVLAAAHELGHLLASDHDEDVGCPGEINYNTRLTGTIMAEYRNNNVSKFIWS</sequence>
<name>VMP02_EULPE</name>
<keyword id="KW-0325">Glycoprotein</keyword>
<keyword id="KW-0378">Hydrolase</keyword>
<keyword id="KW-0479">Metal-binding</keyword>
<keyword id="KW-0482">Metalloprotease</keyword>
<keyword id="KW-0645">Protease</keyword>
<keyword id="KW-0964">Secreted</keyword>
<keyword id="KW-0732">Signal</keyword>
<keyword id="KW-0800">Toxin</keyword>
<keyword id="KW-0862">Zinc</keyword>
<keyword id="KW-0865">Zymogen</keyword>
<evidence type="ECO:0000250" key="1"/>
<evidence type="ECO:0000255" key="2"/>
<evidence type="ECO:0000255" key="3">
    <source>
        <dbReference type="PROSITE-ProRule" id="PRU00276"/>
    </source>
</evidence>
<evidence type="ECO:0000255" key="4">
    <source>
        <dbReference type="PROSITE-ProRule" id="PRU10095"/>
    </source>
</evidence>
<evidence type="ECO:0000305" key="5"/>
<proteinExistence type="evidence at transcript level"/>
<accession>B5AJT3</accession>